<feature type="chain" id="PRO_0000095651" description="RNA-binding protein Hfq">
    <location>
        <begin position="1"/>
        <end position="97"/>
    </location>
</feature>
<feature type="domain" description="Sm" evidence="2">
    <location>
        <begin position="10"/>
        <end position="70"/>
    </location>
</feature>
<feature type="region of interest" description="Disordered" evidence="3">
    <location>
        <begin position="74"/>
        <end position="97"/>
    </location>
</feature>
<feature type="compositionally biased region" description="Polar residues" evidence="3">
    <location>
        <begin position="81"/>
        <end position="97"/>
    </location>
</feature>
<organism>
    <name type="scientific">Neisseria meningitidis serogroup A / serotype 4A (strain DSM 15465 / Z2491)</name>
    <dbReference type="NCBI Taxonomy" id="122587"/>
    <lineage>
        <taxon>Bacteria</taxon>
        <taxon>Pseudomonadati</taxon>
        <taxon>Pseudomonadota</taxon>
        <taxon>Betaproteobacteria</taxon>
        <taxon>Neisseriales</taxon>
        <taxon>Neisseriaceae</taxon>
        <taxon>Neisseria</taxon>
    </lineage>
</organism>
<sequence length="97" mass="10841">MTAKGQMLQDPFLNALRKEHVPVSIYLVNGIKLQGQVESFDQYVVLLRNTSVTQMVYKHAISTIVPARSVNLQHENRPQAAPTSTLVQVETVQQPAE</sequence>
<keyword id="KW-0694">RNA-binding</keyword>
<keyword id="KW-0346">Stress response</keyword>
<reference key="1">
    <citation type="journal article" date="2000" name="Nature">
        <title>Complete DNA sequence of a serogroup A strain of Neisseria meningitidis Z2491.</title>
        <authorList>
            <person name="Parkhill J."/>
            <person name="Achtman M."/>
            <person name="James K.D."/>
            <person name="Bentley S.D."/>
            <person name="Churcher C.M."/>
            <person name="Klee S.R."/>
            <person name="Morelli G."/>
            <person name="Basham D."/>
            <person name="Brown D."/>
            <person name="Chillingworth T."/>
            <person name="Davies R.M."/>
            <person name="Davis P."/>
            <person name="Devlin K."/>
            <person name="Feltwell T."/>
            <person name="Hamlin N."/>
            <person name="Holroyd S."/>
            <person name="Jagels K."/>
            <person name="Leather S."/>
            <person name="Moule S."/>
            <person name="Mungall K.L."/>
            <person name="Quail M.A."/>
            <person name="Rajandream M.A."/>
            <person name="Rutherford K.M."/>
            <person name="Simmonds M."/>
            <person name="Skelton J."/>
            <person name="Whitehead S."/>
            <person name="Spratt B.G."/>
            <person name="Barrell B.G."/>
        </authorList>
    </citation>
    <scope>NUCLEOTIDE SEQUENCE [LARGE SCALE GENOMIC DNA]</scope>
    <source>
        <strain>DSM 15465 / Z2491</strain>
    </source>
</reference>
<name>HFQ_NEIMA</name>
<proteinExistence type="inferred from homology"/>
<gene>
    <name evidence="1" type="primary">hfq</name>
    <name type="ordered locus">NMA0961</name>
</gene>
<comment type="function">
    <text evidence="1">RNA chaperone that binds small regulatory RNA (sRNAs) and mRNAs to facilitate mRNA translational regulation in response to envelope stress, environmental stress and changes in metabolite concentrations. Also binds with high specificity to tRNAs.</text>
</comment>
<comment type="subunit">
    <text evidence="1">Homohexamer.</text>
</comment>
<comment type="similarity">
    <text evidence="1">Belongs to the Hfq family.</text>
</comment>
<protein>
    <recommendedName>
        <fullName evidence="1">RNA-binding protein Hfq</fullName>
    </recommendedName>
</protein>
<accession>P64344</accession>
<accession>A1IR01</accession>
<accession>Q9JQW6</accession>
<evidence type="ECO:0000255" key="1">
    <source>
        <dbReference type="HAMAP-Rule" id="MF_00436"/>
    </source>
</evidence>
<evidence type="ECO:0000255" key="2">
    <source>
        <dbReference type="PROSITE-ProRule" id="PRU01346"/>
    </source>
</evidence>
<evidence type="ECO:0000256" key="3">
    <source>
        <dbReference type="SAM" id="MobiDB-lite"/>
    </source>
</evidence>
<dbReference type="EMBL" id="AL157959">
    <property type="protein sequence ID" value="CAM08185.1"/>
    <property type="molecule type" value="Genomic_DNA"/>
</dbReference>
<dbReference type="RefSeq" id="WP_002214042.1">
    <property type="nucleotide sequence ID" value="NC_003116.1"/>
</dbReference>
<dbReference type="SMR" id="P64344"/>
<dbReference type="EnsemblBacteria" id="CAM08185">
    <property type="protein sequence ID" value="CAM08185"/>
    <property type="gene ID" value="NMA0961"/>
</dbReference>
<dbReference type="GeneID" id="93386421"/>
<dbReference type="KEGG" id="nma:NMA0961"/>
<dbReference type="HOGENOM" id="CLU_113688_2_2_4"/>
<dbReference type="Proteomes" id="UP000000626">
    <property type="component" value="Chromosome"/>
</dbReference>
<dbReference type="GO" id="GO:0005829">
    <property type="term" value="C:cytosol"/>
    <property type="evidence" value="ECO:0007669"/>
    <property type="project" value="TreeGrafter"/>
</dbReference>
<dbReference type="GO" id="GO:0003723">
    <property type="term" value="F:RNA binding"/>
    <property type="evidence" value="ECO:0007669"/>
    <property type="project" value="UniProtKB-UniRule"/>
</dbReference>
<dbReference type="GO" id="GO:0006355">
    <property type="term" value="P:regulation of DNA-templated transcription"/>
    <property type="evidence" value="ECO:0007669"/>
    <property type="project" value="InterPro"/>
</dbReference>
<dbReference type="GO" id="GO:0043487">
    <property type="term" value="P:regulation of RNA stability"/>
    <property type="evidence" value="ECO:0007669"/>
    <property type="project" value="TreeGrafter"/>
</dbReference>
<dbReference type="GO" id="GO:0045974">
    <property type="term" value="P:regulation of translation, ncRNA-mediated"/>
    <property type="evidence" value="ECO:0007669"/>
    <property type="project" value="TreeGrafter"/>
</dbReference>
<dbReference type="CDD" id="cd01716">
    <property type="entry name" value="Hfq"/>
    <property type="match status" value="1"/>
</dbReference>
<dbReference type="FunFam" id="2.30.30.100:FF:000001">
    <property type="entry name" value="RNA-binding protein Hfq"/>
    <property type="match status" value="1"/>
</dbReference>
<dbReference type="Gene3D" id="2.30.30.100">
    <property type="match status" value="1"/>
</dbReference>
<dbReference type="HAMAP" id="MF_00436">
    <property type="entry name" value="Hfq"/>
    <property type="match status" value="1"/>
</dbReference>
<dbReference type="InterPro" id="IPR005001">
    <property type="entry name" value="Hfq"/>
</dbReference>
<dbReference type="InterPro" id="IPR010920">
    <property type="entry name" value="LSM_dom_sf"/>
</dbReference>
<dbReference type="InterPro" id="IPR047575">
    <property type="entry name" value="Sm"/>
</dbReference>
<dbReference type="NCBIfam" id="TIGR02383">
    <property type="entry name" value="Hfq"/>
    <property type="match status" value="1"/>
</dbReference>
<dbReference type="NCBIfam" id="NF001602">
    <property type="entry name" value="PRK00395.1"/>
    <property type="match status" value="1"/>
</dbReference>
<dbReference type="PANTHER" id="PTHR34772">
    <property type="entry name" value="RNA-BINDING PROTEIN HFQ"/>
    <property type="match status" value="1"/>
</dbReference>
<dbReference type="PANTHER" id="PTHR34772:SF1">
    <property type="entry name" value="RNA-BINDING PROTEIN HFQ"/>
    <property type="match status" value="1"/>
</dbReference>
<dbReference type="Pfam" id="PF17209">
    <property type="entry name" value="Hfq"/>
    <property type="match status" value="1"/>
</dbReference>
<dbReference type="SUPFAM" id="SSF50182">
    <property type="entry name" value="Sm-like ribonucleoproteins"/>
    <property type="match status" value="1"/>
</dbReference>
<dbReference type="PROSITE" id="PS52002">
    <property type="entry name" value="SM"/>
    <property type="match status" value="1"/>
</dbReference>